<reference key="1">
    <citation type="journal article" date="2000" name="Syst. Bot.">
        <title>Toward a phylogenetic classification of the Lauraceae: evidence from matK sequences.</title>
        <authorList>
            <person name="Rohwer J.G."/>
        </authorList>
        <dbReference type="AGRICOLA" id="IND22043295"/>
    </citation>
    <scope>NUCLEOTIDE SEQUENCE [GENOMIC DNA]</scope>
    <source>
        <tissue>Leaf</tissue>
    </source>
</reference>
<reference key="2">
    <citation type="submission" date="2005-03" db="EMBL/GenBank/DDBJ databases">
        <authorList>
            <person name="Rohwer J.G."/>
        </authorList>
    </citation>
    <scope>SEQUENCE REVISION</scope>
</reference>
<evidence type="ECO:0000255" key="1">
    <source>
        <dbReference type="HAMAP-Rule" id="MF_01390"/>
    </source>
</evidence>
<feature type="chain" id="PRO_0000143481" description="Maturase K">
    <location>
        <begin position="1"/>
        <end position="507"/>
    </location>
</feature>
<comment type="function">
    <text evidence="1">Usually encoded in the trnK tRNA gene intron. Probably assists in splicing its own and other chloroplast group II introns.</text>
</comment>
<comment type="subcellular location">
    <subcellularLocation>
        <location>Plastid</location>
        <location>Chloroplast</location>
    </subcellularLocation>
</comment>
<comment type="similarity">
    <text evidence="1">Belongs to the intron maturase 2 family. MatK subfamily.</text>
</comment>
<sequence>MEELQGYLEMDGFRQQYFLYPFLFQEYIYALAHGHALNGSILYEPVENLDHDNKSSSLIVKRLITRMHQQNRLIISVNDSNQNRFVGHNNHFDSQMISEGFAVVVEIPFSLRLVSSLEEKEIAKSHNLRSIHSIFPFFEDKLSHLNHVSDILIPHPIHLEILVQTLHSWIQDTPSLHLLRFSLYEYWNSNSLITPKNSISLFSKENQRFFLFLSNSHVYECEFIFIFLRKQPFHLRSKSFGSFLERTHFYAKIEYLVVVLCNDFQKTLWLFKDPFMHYVRYQGKSILASRGARLLIKKWKSHLVNFWQCHFDLWSQPARIHIKQLYNHPFYFLGYLSSVRLNSSVIRSQMLENSFRIDTAIKKFETVVPIIPLIGSLAKAKFCNVSGHPISKPFRADLSDSEILNRFGRICRNLSHYHSGSSKKQSLYRIKYILRLSCARTLSRKHKSTIRAFLKRLGSEFLEEFFTEEEQALSLIFPTTSSPSHRSHRERIWYLDIIRINDLVSHL</sequence>
<gene>
    <name evidence="1" type="primary">matK</name>
</gene>
<protein>
    <recommendedName>
        <fullName evidence="1">Maturase K</fullName>
    </recommendedName>
    <alternativeName>
        <fullName evidence="1">Intron maturase</fullName>
    </alternativeName>
</protein>
<dbReference type="EMBL" id="AJ247169">
    <property type="protein sequence ID" value="CAC05376.2"/>
    <property type="molecule type" value="Genomic_DNA"/>
</dbReference>
<dbReference type="GO" id="GO:0009507">
    <property type="term" value="C:chloroplast"/>
    <property type="evidence" value="ECO:0007669"/>
    <property type="project" value="UniProtKB-SubCell"/>
</dbReference>
<dbReference type="GO" id="GO:0003723">
    <property type="term" value="F:RNA binding"/>
    <property type="evidence" value="ECO:0007669"/>
    <property type="project" value="UniProtKB-KW"/>
</dbReference>
<dbReference type="GO" id="GO:0006397">
    <property type="term" value="P:mRNA processing"/>
    <property type="evidence" value="ECO:0007669"/>
    <property type="project" value="UniProtKB-KW"/>
</dbReference>
<dbReference type="GO" id="GO:0008380">
    <property type="term" value="P:RNA splicing"/>
    <property type="evidence" value="ECO:0007669"/>
    <property type="project" value="UniProtKB-UniRule"/>
</dbReference>
<dbReference type="GO" id="GO:0008033">
    <property type="term" value="P:tRNA processing"/>
    <property type="evidence" value="ECO:0007669"/>
    <property type="project" value="UniProtKB-KW"/>
</dbReference>
<dbReference type="HAMAP" id="MF_01390">
    <property type="entry name" value="MatK"/>
    <property type="match status" value="1"/>
</dbReference>
<dbReference type="InterPro" id="IPR024937">
    <property type="entry name" value="Domain_X"/>
</dbReference>
<dbReference type="InterPro" id="IPR002866">
    <property type="entry name" value="Maturase_MatK"/>
</dbReference>
<dbReference type="InterPro" id="IPR024942">
    <property type="entry name" value="Maturase_MatK_N"/>
</dbReference>
<dbReference type="PANTHER" id="PTHR34811">
    <property type="entry name" value="MATURASE K"/>
    <property type="match status" value="1"/>
</dbReference>
<dbReference type="PANTHER" id="PTHR34811:SF1">
    <property type="entry name" value="MATURASE K"/>
    <property type="match status" value="1"/>
</dbReference>
<dbReference type="Pfam" id="PF01348">
    <property type="entry name" value="Intron_maturas2"/>
    <property type="match status" value="1"/>
</dbReference>
<dbReference type="Pfam" id="PF01824">
    <property type="entry name" value="MatK_N"/>
    <property type="match status" value="1"/>
</dbReference>
<accession>Q9GHV0</accession>
<keyword id="KW-0150">Chloroplast</keyword>
<keyword id="KW-0507">mRNA processing</keyword>
<keyword id="KW-0934">Plastid</keyword>
<keyword id="KW-0694">RNA-binding</keyword>
<keyword id="KW-0819">tRNA processing</keyword>
<name>MATK_LINBE</name>
<organism>
    <name type="scientific">Lindera benzoin</name>
    <name type="common">Spicebush</name>
    <name type="synonym">Laurus benzoin</name>
    <dbReference type="NCBI Taxonomy" id="55958"/>
    <lineage>
        <taxon>Eukaryota</taxon>
        <taxon>Viridiplantae</taxon>
        <taxon>Streptophyta</taxon>
        <taxon>Embryophyta</taxon>
        <taxon>Tracheophyta</taxon>
        <taxon>Spermatophyta</taxon>
        <taxon>Magnoliopsida</taxon>
        <taxon>Magnoliidae</taxon>
        <taxon>Laurales</taxon>
        <taxon>Lauraceae</taxon>
        <taxon>Lindera</taxon>
    </lineage>
</organism>
<proteinExistence type="inferred from homology"/>
<geneLocation type="chloroplast"/>